<accession>Q1QVG8</accession>
<name>MURC_CHRSD</name>
<comment type="function">
    <text evidence="1">Cell wall formation.</text>
</comment>
<comment type="catalytic activity">
    <reaction evidence="1">
        <text>UDP-N-acetyl-alpha-D-muramate + L-alanine + ATP = UDP-N-acetyl-alpha-D-muramoyl-L-alanine + ADP + phosphate + H(+)</text>
        <dbReference type="Rhea" id="RHEA:23372"/>
        <dbReference type="ChEBI" id="CHEBI:15378"/>
        <dbReference type="ChEBI" id="CHEBI:30616"/>
        <dbReference type="ChEBI" id="CHEBI:43474"/>
        <dbReference type="ChEBI" id="CHEBI:57972"/>
        <dbReference type="ChEBI" id="CHEBI:70757"/>
        <dbReference type="ChEBI" id="CHEBI:83898"/>
        <dbReference type="ChEBI" id="CHEBI:456216"/>
        <dbReference type="EC" id="6.3.2.8"/>
    </reaction>
</comment>
<comment type="pathway">
    <text evidence="1">Cell wall biogenesis; peptidoglycan biosynthesis.</text>
</comment>
<comment type="subcellular location">
    <subcellularLocation>
        <location evidence="1">Cytoplasm</location>
    </subcellularLocation>
</comment>
<comment type="similarity">
    <text evidence="1">Belongs to the MurCDEF family.</text>
</comment>
<feature type="chain" id="PRO_1000004330" description="UDP-N-acetylmuramate--L-alanine ligase">
    <location>
        <begin position="1"/>
        <end position="488"/>
    </location>
</feature>
<feature type="binding site" evidence="1">
    <location>
        <begin position="129"/>
        <end position="135"/>
    </location>
    <ligand>
        <name>ATP</name>
        <dbReference type="ChEBI" id="CHEBI:30616"/>
    </ligand>
</feature>
<keyword id="KW-0067">ATP-binding</keyword>
<keyword id="KW-0131">Cell cycle</keyword>
<keyword id="KW-0132">Cell division</keyword>
<keyword id="KW-0133">Cell shape</keyword>
<keyword id="KW-0961">Cell wall biogenesis/degradation</keyword>
<keyword id="KW-0963">Cytoplasm</keyword>
<keyword id="KW-0436">Ligase</keyword>
<keyword id="KW-0547">Nucleotide-binding</keyword>
<keyword id="KW-0573">Peptidoglycan synthesis</keyword>
<keyword id="KW-1185">Reference proteome</keyword>
<proteinExistence type="inferred from homology"/>
<evidence type="ECO:0000255" key="1">
    <source>
        <dbReference type="HAMAP-Rule" id="MF_00046"/>
    </source>
</evidence>
<sequence>MTASSVHSPVRQNRTGLGMRRIRHIHFVGIGGAGMCGIAEVLANQGYIVSGSDLRESAVTRHLRDCDIRVYIGHVDEHAHGADVLVVSTAVDLENPEIRWAREHRIPVVRRAEMLAELMRFRHGIAVAGTHGKTTTTSLTSTLLAEGGLDPTFVIGGKLTSAGTNARLGEGDYLVAEADESDASFLHLQPMVSIVTNIDADHMATYAGDFARLKDTFLEFLHNLPFYGLAVLCLDDDNVRGLLPRVQRQFVTYGFAEDADYRLRDFVQRGGEVQFTAERPPGMAPLEIRLGMPGRHNALNALAAIAVASDAGVDDAAIQQGLLHFAGVGRRFQVHGHYPAPGGEGDVMLVDDYGHHPREVEMVIDAVRAGWPERRLVMLYQPHRYSRTRDLYEDFVRVLSGVDTLLLLDVYSAGESSIPGAEGRTLAGSIRQRGQVDPIFVESKQELPALLSRVLRPDDILITQGAGDIGGISLRLAAGQLDLNGMEL</sequence>
<gene>
    <name evidence="1" type="primary">murC</name>
    <name type="ordered locus">Csal_2189</name>
</gene>
<dbReference type="EC" id="6.3.2.8" evidence="1"/>
<dbReference type="EMBL" id="CP000285">
    <property type="protein sequence ID" value="ABE59540.1"/>
    <property type="molecule type" value="Genomic_DNA"/>
</dbReference>
<dbReference type="SMR" id="Q1QVG8"/>
<dbReference type="STRING" id="290398.Csal_2189"/>
<dbReference type="KEGG" id="csa:Csal_2189"/>
<dbReference type="eggNOG" id="COG0773">
    <property type="taxonomic scope" value="Bacteria"/>
</dbReference>
<dbReference type="HOGENOM" id="CLU_028104_2_2_6"/>
<dbReference type="UniPathway" id="UPA00219"/>
<dbReference type="Proteomes" id="UP000000239">
    <property type="component" value="Chromosome"/>
</dbReference>
<dbReference type="GO" id="GO:0005737">
    <property type="term" value="C:cytoplasm"/>
    <property type="evidence" value="ECO:0007669"/>
    <property type="project" value="UniProtKB-SubCell"/>
</dbReference>
<dbReference type="GO" id="GO:0005524">
    <property type="term" value="F:ATP binding"/>
    <property type="evidence" value="ECO:0007669"/>
    <property type="project" value="UniProtKB-UniRule"/>
</dbReference>
<dbReference type="GO" id="GO:0008763">
    <property type="term" value="F:UDP-N-acetylmuramate-L-alanine ligase activity"/>
    <property type="evidence" value="ECO:0007669"/>
    <property type="project" value="UniProtKB-UniRule"/>
</dbReference>
<dbReference type="GO" id="GO:0051301">
    <property type="term" value="P:cell division"/>
    <property type="evidence" value="ECO:0007669"/>
    <property type="project" value="UniProtKB-KW"/>
</dbReference>
<dbReference type="GO" id="GO:0071555">
    <property type="term" value="P:cell wall organization"/>
    <property type="evidence" value="ECO:0007669"/>
    <property type="project" value="UniProtKB-KW"/>
</dbReference>
<dbReference type="GO" id="GO:0009252">
    <property type="term" value="P:peptidoglycan biosynthetic process"/>
    <property type="evidence" value="ECO:0007669"/>
    <property type="project" value="UniProtKB-UniRule"/>
</dbReference>
<dbReference type="GO" id="GO:0008360">
    <property type="term" value="P:regulation of cell shape"/>
    <property type="evidence" value="ECO:0007669"/>
    <property type="project" value="UniProtKB-KW"/>
</dbReference>
<dbReference type="FunFam" id="3.40.1190.10:FF:000001">
    <property type="entry name" value="UDP-N-acetylmuramate--L-alanine ligase"/>
    <property type="match status" value="1"/>
</dbReference>
<dbReference type="Gene3D" id="3.90.190.20">
    <property type="entry name" value="Mur ligase, C-terminal domain"/>
    <property type="match status" value="1"/>
</dbReference>
<dbReference type="Gene3D" id="3.40.1190.10">
    <property type="entry name" value="Mur-like, catalytic domain"/>
    <property type="match status" value="1"/>
</dbReference>
<dbReference type="Gene3D" id="3.40.50.720">
    <property type="entry name" value="NAD(P)-binding Rossmann-like Domain"/>
    <property type="match status" value="1"/>
</dbReference>
<dbReference type="HAMAP" id="MF_00046">
    <property type="entry name" value="MurC"/>
    <property type="match status" value="1"/>
</dbReference>
<dbReference type="InterPro" id="IPR036565">
    <property type="entry name" value="Mur-like_cat_sf"/>
</dbReference>
<dbReference type="InterPro" id="IPR004101">
    <property type="entry name" value="Mur_ligase_C"/>
</dbReference>
<dbReference type="InterPro" id="IPR036615">
    <property type="entry name" value="Mur_ligase_C_dom_sf"/>
</dbReference>
<dbReference type="InterPro" id="IPR013221">
    <property type="entry name" value="Mur_ligase_cen"/>
</dbReference>
<dbReference type="InterPro" id="IPR000713">
    <property type="entry name" value="Mur_ligase_N"/>
</dbReference>
<dbReference type="InterPro" id="IPR050061">
    <property type="entry name" value="MurCDEF_pg_biosynth"/>
</dbReference>
<dbReference type="InterPro" id="IPR005758">
    <property type="entry name" value="UDP-N-AcMur_Ala_ligase_MurC"/>
</dbReference>
<dbReference type="NCBIfam" id="TIGR01082">
    <property type="entry name" value="murC"/>
    <property type="match status" value="1"/>
</dbReference>
<dbReference type="PANTHER" id="PTHR43445:SF3">
    <property type="entry name" value="UDP-N-ACETYLMURAMATE--L-ALANINE LIGASE"/>
    <property type="match status" value="1"/>
</dbReference>
<dbReference type="PANTHER" id="PTHR43445">
    <property type="entry name" value="UDP-N-ACETYLMURAMATE--L-ALANINE LIGASE-RELATED"/>
    <property type="match status" value="1"/>
</dbReference>
<dbReference type="Pfam" id="PF01225">
    <property type="entry name" value="Mur_ligase"/>
    <property type="match status" value="1"/>
</dbReference>
<dbReference type="Pfam" id="PF02875">
    <property type="entry name" value="Mur_ligase_C"/>
    <property type="match status" value="1"/>
</dbReference>
<dbReference type="Pfam" id="PF08245">
    <property type="entry name" value="Mur_ligase_M"/>
    <property type="match status" value="1"/>
</dbReference>
<dbReference type="SUPFAM" id="SSF51984">
    <property type="entry name" value="MurCD N-terminal domain"/>
    <property type="match status" value="1"/>
</dbReference>
<dbReference type="SUPFAM" id="SSF53623">
    <property type="entry name" value="MurD-like peptide ligases, catalytic domain"/>
    <property type="match status" value="1"/>
</dbReference>
<dbReference type="SUPFAM" id="SSF53244">
    <property type="entry name" value="MurD-like peptide ligases, peptide-binding domain"/>
    <property type="match status" value="1"/>
</dbReference>
<organism>
    <name type="scientific">Chromohalobacter salexigens (strain ATCC BAA-138 / DSM 3043 / CIP 106854 / NCIMB 13768 / 1H11)</name>
    <dbReference type="NCBI Taxonomy" id="290398"/>
    <lineage>
        <taxon>Bacteria</taxon>
        <taxon>Pseudomonadati</taxon>
        <taxon>Pseudomonadota</taxon>
        <taxon>Gammaproteobacteria</taxon>
        <taxon>Oceanospirillales</taxon>
        <taxon>Halomonadaceae</taxon>
        <taxon>Chromohalobacter</taxon>
    </lineage>
</organism>
<protein>
    <recommendedName>
        <fullName evidence="1">UDP-N-acetylmuramate--L-alanine ligase</fullName>
        <ecNumber evidence="1">6.3.2.8</ecNumber>
    </recommendedName>
    <alternativeName>
        <fullName evidence="1">UDP-N-acetylmuramoyl-L-alanine synthetase</fullName>
    </alternativeName>
</protein>
<reference key="1">
    <citation type="journal article" date="2011" name="Stand. Genomic Sci.">
        <title>Complete genome sequence of the halophilic and highly halotolerant Chromohalobacter salexigens type strain (1H11(T)).</title>
        <authorList>
            <person name="Copeland A."/>
            <person name="O'Connor K."/>
            <person name="Lucas S."/>
            <person name="Lapidus A."/>
            <person name="Berry K.W."/>
            <person name="Detter J.C."/>
            <person name="Del Rio T.G."/>
            <person name="Hammon N."/>
            <person name="Dalin E."/>
            <person name="Tice H."/>
            <person name="Pitluck S."/>
            <person name="Bruce D."/>
            <person name="Goodwin L."/>
            <person name="Han C."/>
            <person name="Tapia R."/>
            <person name="Saunders E."/>
            <person name="Schmutz J."/>
            <person name="Brettin T."/>
            <person name="Larimer F."/>
            <person name="Land M."/>
            <person name="Hauser L."/>
            <person name="Vargas C."/>
            <person name="Nieto J.J."/>
            <person name="Kyrpides N.C."/>
            <person name="Ivanova N."/>
            <person name="Goker M."/>
            <person name="Klenk H.P."/>
            <person name="Csonka L.N."/>
            <person name="Woyke T."/>
        </authorList>
    </citation>
    <scope>NUCLEOTIDE SEQUENCE [LARGE SCALE GENOMIC DNA]</scope>
    <source>
        <strain>ATCC BAA-138 / DSM 3043 / CIP 106854 / NCIMB 13768 / 1H11</strain>
    </source>
</reference>